<sequence length="1431" mass="143716">MDRRNDYGYRVPLFQGPLPPPGSLGLPFPPDIQTETTEEDSVLLMHTLLAATKDSLAMDPPVVNRPKKSKTKKAPIKTITKAAPAAPPVPAANEIATNKPKITWQALNLPVITQISQALPTTEVTNTQASSVTAQPKKANKMKRVTAKAAQGSQSPTGHEGGTIQLKSPLQVLKLPVISQNIHAPIANESASSQALITSIKPKKASKAKKAANKAIASATEVSLAATATHTATTQGQITNETASIHTTAASIRTKKASKARKTIAKVINTDTEHIEALNVTDAATRQIEASVVAIRPKKSKGKKAASRGPNSVSEISEAPLATQIVTNQALAATLRVKRGSRARKAATKARATESQTPNADQGAQAKIASAQTNVSALETQVAAAVQALADDYLAQLSLEPTTRTRGKRNRKSKHLNGDERSGSNYRRIPWGRRPAPPRDVAILQERANKLVKYLLVKDQTKIPIKRSDMLRDVIQEYDEYFPEIIERASYTLEKMFRVNLKEIDKQSSLYILISTQESSAGILGTTKDTPKLGLLMVILSVIFMNGNKASEAVIWEVLRKLGLRPGVRHSLFGEVRKLITDEFVKQKYLEYKRVPNSRPPEYEFFWGLRSYHETSKMKVLKFACRVQKKDPKDWAVQYREAVEMEVQAAAVAVAEAEARAEARAQMGIGEEAVAGPWNWDDMDIDCLTREELGDDAQAWSRFSFEIEARAQENADASTNVNFSRGASTRAGFSDGASISFNGAPSSSGGFSGGPGITFGVAPSTSASFSNTASISFGGTLSTSSSFSSAASISFGCAHSTSTSFSSEASISFGGMPCTSASFSGGVSSSFSGPLSTSATFSGGASSGFGGTLSTTAGFSGVLSTSTSFGSAPTTSTVFSSALSTSTGFGGILSTSVCFGGSPSSSGSFGGTLSTSICFGGSPCTSTGFGGTLSTSVSFGGSSSTSANFGGTLSTSICFDGSPSTGAGFGGALNTSASFGSVLNTSTGFGGAMSTSADFGGTLSTSVCFGGSPGTSVSFGSALNTNAGYGGAVSTNTDFGGTLSTSVCFGGSPSTSAGFGGALNTNASFGCAVSTSASFSGAVSTSACFSGAPITNPGFGGAFSTSAGFGGALSTAADFGGTPSNSIGFGAAPSTSVSFGGAHGTSLCFGGAPSTSLCFGSASNTNLCFGGPPSTSACFSGATSPSFCDGPSTSTGFSFGNGLSTNAGFGGGLNTSAGFGGGLGTSAGFSGGLSTSSGFDGGLGTSAGFGGGPGTSTGFGGGLGTSAGFSGGLGTSAGFGGGLVTSDGFGGGLGTNASFGSTLGTSAGFSGGLSTSDGFGSRPNASFDRGLSTIIGFGSGSNTSTGFTGEPSTSTGFSSGPSSIVGFSGGPSTGVGFCSGPSTSGFSGGPSTGAGFGGGPNTGAGFGGGPSTSAGFGSGAASLGACGFSYG</sequence>
<keyword id="KW-0025">Alternative splicing</keyword>
<keyword id="KW-0130">Cell adhesion</keyword>
<keyword id="KW-1267">Proteomics identification</keyword>
<keyword id="KW-1185">Reference proteome</keyword>
<keyword id="KW-0677">Repeat</keyword>
<proteinExistence type="evidence at protein level"/>
<name>TROP_HUMAN</name>
<dbReference type="EMBL" id="AB029037">
    <property type="protein sequence ID" value="BAA83066.3"/>
    <property type="status" value="ALT_INIT"/>
    <property type="molecule type" value="mRNA"/>
</dbReference>
<dbReference type="EMBL" id="AK027489">
    <property type="protein sequence ID" value="BAB55149.1"/>
    <property type="molecule type" value="mRNA"/>
</dbReference>
<dbReference type="EMBL" id="AL049732">
    <property type="status" value="NOT_ANNOTATED_CDS"/>
    <property type="molecule type" value="Genomic_DNA"/>
</dbReference>
<dbReference type="EMBL" id="CH471154">
    <property type="protein sequence ID" value="EAW93200.1"/>
    <property type="molecule type" value="Genomic_DNA"/>
</dbReference>
<dbReference type="EMBL" id="CH471154">
    <property type="protein sequence ID" value="EAW93205.1"/>
    <property type="molecule type" value="Genomic_DNA"/>
</dbReference>
<dbReference type="EMBL" id="U04811">
    <property type="protein sequence ID" value="AAA79334.2"/>
    <property type="status" value="ALT_INIT"/>
    <property type="molecule type" value="mRNA"/>
</dbReference>
<dbReference type="CCDS" id="CCDS43958.1">
    <molecule id="Q12816-2"/>
</dbReference>
<dbReference type="CCDS" id="CCDS43959.1">
    <molecule id="Q12816-1"/>
</dbReference>
<dbReference type="CCDS" id="CCDS59527.1">
    <molecule id="Q12816-5"/>
</dbReference>
<dbReference type="CCDS" id="CCDS59528.1">
    <molecule id="Q12816-4"/>
</dbReference>
<dbReference type="CCDS" id="CCDS59529.1">
    <molecule id="Q12816-3"/>
</dbReference>
<dbReference type="PIR" id="I38488">
    <property type="entry name" value="I38488"/>
</dbReference>
<dbReference type="RefSeq" id="NP_001034794.1">
    <molecule id="Q12816-1"/>
    <property type="nucleotide sequence ID" value="NM_001039705.3"/>
</dbReference>
<dbReference type="RefSeq" id="NP_001258112.1">
    <molecule id="Q12816-3"/>
    <property type="nucleotide sequence ID" value="NM_001271183.2"/>
</dbReference>
<dbReference type="RefSeq" id="NP_001258113.1">
    <molecule id="Q12816-4"/>
    <property type="nucleotide sequence ID" value="NM_001271184.2"/>
</dbReference>
<dbReference type="RefSeq" id="NP_057241.2">
    <molecule id="Q12816-2"/>
    <property type="nucleotide sequence ID" value="NM_016157.3"/>
</dbReference>
<dbReference type="RefSeq" id="NP_808224.1">
    <molecule id="Q12816-2"/>
    <property type="nucleotide sequence ID" value="NM_177556.3"/>
</dbReference>
<dbReference type="RefSeq" id="NP_808225.1">
    <molecule id="Q12816-5"/>
    <property type="nucleotide sequence ID" value="NM_177557.3"/>
</dbReference>
<dbReference type="RefSeq" id="XP_006724663.1">
    <property type="nucleotide sequence ID" value="XM_006724600.2"/>
</dbReference>
<dbReference type="RefSeq" id="XP_011529110.1">
    <property type="nucleotide sequence ID" value="XM_011530808.1"/>
</dbReference>
<dbReference type="RefSeq" id="XP_011529111.1">
    <molecule id="Q12816-1"/>
    <property type="nucleotide sequence ID" value="XM_011530809.2"/>
</dbReference>
<dbReference type="RefSeq" id="XP_011529113.1">
    <molecule id="Q12816-1"/>
    <property type="nucleotide sequence ID" value="XM_011530811.3"/>
</dbReference>
<dbReference type="RefSeq" id="XP_011529114.1">
    <molecule id="Q12816-1"/>
    <property type="nucleotide sequence ID" value="XM_011530812.2"/>
</dbReference>
<dbReference type="RefSeq" id="XP_011529115.1">
    <molecule id="Q12816-1"/>
    <property type="nucleotide sequence ID" value="XM_011530813.2"/>
</dbReference>
<dbReference type="RefSeq" id="XP_016885256.1">
    <molecule id="Q12816-1"/>
    <property type="nucleotide sequence ID" value="XM_017029767.2"/>
</dbReference>
<dbReference type="RefSeq" id="XP_016885258.1">
    <molecule id="Q12816-2"/>
    <property type="nucleotide sequence ID" value="XM_017029769.2"/>
</dbReference>
<dbReference type="RefSeq" id="XP_016885259.1">
    <molecule id="Q12816-2"/>
    <property type="nucleotide sequence ID" value="XM_017029770.2"/>
</dbReference>
<dbReference type="RefSeq" id="XP_016885260.1">
    <molecule id="Q12816-2"/>
    <property type="nucleotide sequence ID" value="XM_017029771.2"/>
</dbReference>
<dbReference type="RefSeq" id="XP_047298365.1">
    <molecule id="Q12816-1"/>
    <property type="nucleotide sequence ID" value="XM_047442409.1"/>
</dbReference>
<dbReference type="RefSeq" id="XP_047298366.1">
    <molecule id="Q12816-1"/>
    <property type="nucleotide sequence ID" value="XM_047442410.1"/>
</dbReference>
<dbReference type="RefSeq" id="XP_054183636.1">
    <molecule id="Q12816-1"/>
    <property type="nucleotide sequence ID" value="XM_054327661.1"/>
</dbReference>
<dbReference type="RefSeq" id="XP_054183637.1">
    <molecule id="Q12816-1"/>
    <property type="nucleotide sequence ID" value="XM_054327662.1"/>
</dbReference>
<dbReference type="RefSeq" id="XP_054183638.1">
    <molecule id="Q12816-1"/>
    <property type="nucleotide sequence ID" value="XM_054327663.1"/>
</dbReference>
<dbReference type="RefSeq" id="XP_054183639.1">
    <molecule id="Q12816-1"/>
    <property type="nucleotide sequence ID" value="XM_054327664.1"/>
</dbReference>
<dbReference type="RefSeq" id="XP_054183640.1">
    <molecule id="Q12816-1"/>
    <property type="nucleotide sequence ID" value="XM_054327665.1"/>
</dbReference>
<dbReference type="RefSeq" id="XP_054183641.1">
    <molecule id="Q12816-1"/>
    <property type="nucleotide sequence ID" value="XM_054327666.1"/>
</dbReference>
<dbReference type="RefSeq" id="XP_054183642.1">
    <molecule id="Q12816-1"/>
    <property type="nucleotide sequence ID" value="XM_054327667.1"/>
</dbReference>
<dbReference type="RefSeq" id="XP_054183644.1">
    <molecule id="Q12816-2"/>
    <property type="nucleotide sequence ID" value="XM_054327669.1"/>
</dbReference>
<dbReference type="RefSeq" id="XP_054183645.1">
    <molecule id="Q12816-2"/>
    <property type="nucleotide sequence ID" value="XM_054327670.1"/>
</dbReference>
<dbReference type="RefSeq" id="XP_054183646.1">
    <molecule id="Q12816-2"/>
    <property type="nucleotide sequence ID" value="XM_054327671.1"/>
</dbReference>
<dbReference type="BioGRID" id="113067">
    <property type="interactions" value="69"/>
</dbReference>
<dbReference type="FunCoup" id="Q12816">
    <property type="interactions" value="428"/>
</dbReference>
<dbReference type="IntAct" id="Q12816">
    <property type="interactions" value="40"/>
</dbReference>
<dbReference type="MINT" id="Q12816"/>
<dbReference type="STRING" id="9606.ENSP00000173898"/>
<dbReference type="GlyGen" id="Q12816">
    <property type="glycosylation" value="1 site, 1 O-linked glycan (1 site)"/>
</dbReference>
<dbReference type="iPTMnet" id="Q12816"/>
<dbReference type="PhosphoSitePlus" id="Q12816"/>
<dbReference type="BioMuta" id="TRO"/>
<dbReference type="DMDM" id="152031714"/>
<dbReference type="jPOST" id="Q12816"/>
<dbReference type="MassIVE" id="Q12816"/>
<dbReference type="PaxDb" id="9606-ENSP00000173898"/>
<dbReference type="PeptideAtlas" id="Q12816"/>
<dbReference type="ProteomicsDB" id="24606"/>
<dbReference type="ProteomicsDB" id="3053"/>
<dbReference type="ProteomicsDB" id="3054"/>
<dbReference type="ProteomicsDB" id="58968">
    <molecule id="Q12816-1"/>
</dbReference>
<dbReference type="ProteomicsDB" id="58969">
    <molecule id="Q12816-2"/>
</dbReference>
<dbReference type="Pumba" id="Q12816"/>
<dbReference type="Antibodypedia" id="62228">
    <property type="antibodies" value="61 antibodies from 16 providers"/>
</dbReference>
<dbReference type="DNASU" id="7216"/>
<dbReference type="Ensembl" id="ENST00000173898.12">
    <molecule id="Q12816-1"/>
    <property type="protein sequence ID" value="ENSP00000173898.7"/>
    <property type="gene ID" value="ENSG00000067445.22"/>
</dbReference>
<dbReference type="Ensembl" id="ENST00000319167.12">
    <molecule id="Q12816-2"/>
    <property type="protein sequence ID" value="ENSP00000318278.8"/>
    <property type="gene ID" value="ENSG00000067445.22"/>
</dbReference>
<dbReference type="Ensembl" id="ENST00000375022.8">
    <molecule id="Q12816-2"/>
    <property type="protein sequence ID" value="ENSP00000364162.4"/>
    <property type="gene ID" value="ENSG00000067445.22"/>
</dbReference>
<dbReference type="Ensembl" id="ENST00000375041.6">
    <molecule id="Q12816-4"/>
    <property type="protein sequence ID" value="ENSP00000364181.2"/>
    <property type="gene ID" value="ENSG00000067445.22"/>
</dbReference>
<dbReference type="Ensembl" id="ENST00000399736.5">
    <molecule id="Q12816-5"/>
    <property type="protein sequence ID" value="ENSP00000382641.1"/>
    <property type="gene ID" value="ENSG00000067445.22"/>
</dbReference>
<dbReference type="Ensembl" id="ENST00000420798.6">
    <molecule id="Q12816-3"/>
    <property type="protein sequence ID" value="ENSP00000405126.2"/>
    <property type="gene ID" value="ENSG00000067445.22"/>
</dbReference>
<dbReference type="GeneID" id="7216"/>
<dbReference type="KEGG" id="hsa:7216"/>
<dbReference type="MANE-Select" id="ENST00000173898.12">
    <property type="protein sequence ID" value="ENSP00000173898.7"/>
    <property type="RefSeq nucleotide sequence ID" value="NM_001039705.3"/>
    <property type="RefSeq protein sequence ID" value="NP_001034794.1"/>
</dbReference>
<dbReference type="UCSC" id="uc004dtq.6">
    <molecule id="Q12816-1"/>
    <property type="organism name" value="human"/>
</dbReference>
<dbReference type="AGR" id="HGNC:12326"/>
<dbReference type="CTD" id="7216"/>
<dbReference type="DisGeNET" id="7216"/>
<dbReference type="GeneCards" id="TRO"/>
<dbReference type="HGNC" id="HGNC:12326">
    <property type="gene designation" value="TRO"/>
</dbReference>
<dbReference type="HPA" id="ENSG00000067445">
    <property type="expression patterns" value="Tissue enhanced (skeletal)"/>
</dbReference>
<dbReference type="MIM" id="300132">
    <property type="type" value="gene"/>
</dbReference>
<dbReference type="neXtProt" id="NX_Q12816"/>
<dbReference type="OpenTargets" id="ENSG00000067445"/>
<dbReference type="PharmGKB" id="PA37002"/>
<dbReference type="VEuPathDB" id="HostDB:ENSG00000067445"/>
<dbReference type="eggNOG" id="KOG4562">
    <property type="taxonomic scope" value="Eukaryota"/>
</dbReference>
<dbReference type="GeneTree" id="ENSGT00940000162763"/>
<dbReference type="HOGENOM" id="CLU_001549_0_0_1"/>
<dbReference type="InParanoid" id="Q12816"/>
<dbReference type="OMA" id="ATKMYIC"/>
<dbReference type="OrthoDB" id="205198at2759"/>
<dbReference type="PAN-GO" id="Q12816">
    <property type="GO annotations" value="2 GO annotations based on evolutionary models"/>
</dbReference>
<dbReference type="PhylomeDB" id="Q12816"/>
<dbReference type="TreeFam" id="TF352132"/>
<dbReference type="PathwayCommons" id="Q12816"/>
<dbReference type="SignaLink" id="Q12816"/>
<dbReference type="BioGRID-ORCS" id="7216">
    <property type="hits" value="7 hits in 769 CRISPR screens"/>
</dbReference>
<dbReference type="ChiTaRS" id="TRO">
    <property type="organism name" value="human"/>
</dbReference>
<dbReference type="GeneWiki" id="TRO_(gene)"/>
<dbReference type="GenomeRNAi" id="7216"/>
<dbReference type="Pharos" id="Q12816">
    <property type="development level" value="Tbio"/>
</dbReference>
<dbReference type="PRO" id="PR:Q12816"/>
<dbReference type="Proteomes" id="UP000005640">
    <property type="component" value="Chromosome X"/>
</dbReference>
<dbReference type="RNAct" id="Q12816">
    <property type="molecule type" value="protein"/>
</dbReference>
<dbReference type="Bgee" id="ENSG00000067445">
    <property type="expression patterns" value="Expressed in adenohypophysis and 155 other cell types or tissues"/>
</dbReference>
<dbReference type="ExpressionAtlas" id="Q12816">
    <property type="expression patterns" value="baseline and differential"/>
</dbReference>
<dbReference type="GO" id="GO:0005634">
    <property type="term" value="C:nucleus"/>
    <property type="evidence" value="ECO:0000318"/>
    <property type="project" value="GO_Central"/>
</dbReference>
<dbReference type="GO" id="GO:0005886">
    <property type="term" value="C:plasma membrane"/>
    <property type="evidence" value="ECO:0000304"/>
    <property type="project" value="UniProtKB"/>
</dbReference>
<dbReference type="GO" id="GO:0007566">
    <property type="term" value="P:embryo implantation"/>
    <property type="evidence" value="ECO:0000304"/>
    <property type="project" value="ProtInc"/>
</dbReference>
<dbReference type="GO" id="GO:0007156">
    <property type="term" value="P:homophilic cell adhesion via plasma membrane adhesion molecules"/>
    <property type="evidence" value="ECO:0000304"/>
    <property type="project" value="ProtInc"/>
</dbReference>
<dbReference type="GO" id="GO:0000122">
    <property type="term" value="P:negative regulation of transcription by RNA polymerase II"/>
    <property type="evidence" value="ECO:0000318"/>
    <property type="project" value="GO_Central"/>
</dbReference>
<dbReference type="FunFam" id="1.10.10.1200:FF:000001">
    <property type="entry name" value="Melanoma-associated antigen D1"/>
    <property type="match status" value="1"/>
</dbReference>
<dbReference type="FunFam" id="1.10.10.1210:FF:000001">
    <property type="entry name" value="melanoma-associated antigen D1"/>
    <property type="match status" value="1"/>
</dbReference>
<dbReference type="Gene3D" id="1.10.10.1200">
    <property type="entry name" value="MAGE homology domain, winged helix WH1 motif"/>
    <property type="match status" value="1"/>
</dbReference>
<dbReference type="Gene3D" id="1.10.10.1210">
    <property type="entry name" value="MAGE homology domain, winged helix WH2 motif"/>
    <property type="match status" value="1"/>
</dbReference>
<dbReference type="InterPro" id="IPR037445">
    <property type="entry name" value="MAGE"/>
</dbReference>
<dbReference type="InterPro" id="IPR041898">
    <property type="entry name" value="MAGE_WH1"/>
</dbReference>
<dbReference type="InterPro" id="IPR041899">
    <property type="entry name" value="MAGE_WH2"/>
</dbReference>
<dbReference type="InterPro" id="IPR002190">
    <property type="entry name" value="MHD_dom"/>
</dbReference>
<dbReference type="PANTHER" id="PTHR11736">
    <property type="entry name" value="MELANOMA-ASSOCIATED ANTIGEN MAGE ANTIGEN"/>
    <property type="match status" value="1"/>
</dbReference>
<dbReference type="PANTHER" id="PTHR11736:SF83">
    <property type="entry name" value="TROPHININ"/>
    <property type="match status" value="1"/>
</dbReference>
<dbReference type="Pfam" id="PF01454">
    <property type="entry name" value="MAGE"/>
    <property type="match status" value="1"/>
</dbReference>
<dbReference type="SMART" id="SM01373">
    <property type="entry name" value="MAGE"/>
    <property type="match status" value="1"/>
</dbReference>
<dbReference type="SUPFAM" id="SSF141571">
    <property type="entry name" value="Pentapeptide repeat-like"/>
    <property type="match status" value="1"/>
</dbReference>
<dbReference type="PROSITE" id="PS50838">
    <property type="entry name" value="MAGE"/>
    <property type="match status" value="1"/>
</dbReference>
<accession>Q12816</accession>
<accession>B1AKE9</accession>
<accession>B1AKF1</accession>
<accession>F5GY27</accession>
<accession>Q96SX2</accession>
<accession>Q9NU89</accession>
<accession>Q9UPN8</accession>
<evidence type="ECO:0000255" key="1">
    <source>
        <dbReference type="PROSITE-ProRule" id="PRU00127"/>
    </source>
</evidence>
<evidence type="ECO:0000256" key="2">
    <source>
        <dbReference type="SAM" id="MobiDB-lite"/>
    </source>
</evidence>
<evidence type="ECO:0000269" key="3">
    <source>
    </source>
</evidence>
<evidence type="ECO:0000269" key="4">
    <source>
    </source>
</evidence>
<evidence type="ECO:0000303" key="5">
    <source>
    </source>
</evidence>
<evidence type="ECO:0000305" key="6"/>
<gene>
    <name type="primary">TRO</name>
    <name type="synonym">KIAA1114</name>
    <name type="synonym">MAGED3</name>
</gene>
<organism>
    <name type="scientific">Homo sapiens</name>
    <name type="common">Human</name>
    <dbReference type="NCBI Taxonomy" id="9606"/>
    <lineage>
        <taxon>Eukaryota</taxon>
        <taxon>Metazoa</taxon>
        <taxon>Chordata</taxon>
        <taxon>Craniata</taxon>
        <taxon>Vertebrata</taxon>
        <taxon>Euteleostomi</taxon>
        <taxon>Mammalia</taxon>
        <taxon>Eutheria</taxon>
        <taxon>Euarchontoglires</taxon>
        <taxon>Primates</taxon>
        <taxon>Haplorrhini</taxon>
        <taxon>Catarrhini</taxon>
        <taxon>Hominidae</taxon>
        <taxon>Homo</taxon>
    </lineage>
</organism>
<protein>
    <recommendedName>
        <fullName>Trophinin</fullName>
    </recommendedName>
    <alternativeName>
        <fullName>MAGE-D3 antigen</fullName>
    </alternativeName>
</protein>
<feature type="chain" id="PRO_0000156742" description="Trophinin">
    <location>
        <begin position="1"/>
        <end position="1431"/>
    </location>
</feature>
<feature type="domain" description="MAGE" evidence="1">
    <location>
        <begin position="444"/>
        <end position="642"/>
    </location>
</feature>
<feature type="repeat" description="1">
    <location>
        <begin position="751"/>
        <end position="760"/>
    </location>
</feature>
<feature type="repeat" description="2">
    <location>
        <begin position="769"/>
        <end position="778"/>
    </location>
</feature>
<feature type="repeat" description="3; approximate">
    <location>
        <begin position="779"/>
        <end position="786"/>
    </location>
</feature>
<feature type="repeat" description="4">
    <location>
        <begin position="787"/>
        <end position="796"/>
    </location>
</feature>
<feature type="repeat" description="5">
    <location>
        <begin position="805"/>
        <end position="814"/>
    </location>
</feature>
<feature type="repeat" description="6; approximate">
    <location>
        <begin position="823"/>
        <end position="833"/>
    </location>
</feature>
<feature type="repeat" description="7">
    <location>
        <begin position="841"/>
        <end position="850"/>
    </location>
</feature>
<feature type="repeat" description="8; approximate">
    <location>
        <begin position="859"/>
        <end position="870"/>
    </location>
</feature>
<feature type="repeat" description="9; approximate">
    <location>
        <begin position="879"/>
        <end position="890"/>
    </location>
</feature>
<feature type="repeat" description="10">
    <location>
        <begin position="901"/>
        <end position="910"/>
    </location>
</feature>
<feature type="repeat" description="11">
    <location>
        <begin position="911"/>
        <end position="920"/>
    </location>
</feature>
<feature type="repeat" description="12">
    <location>
        <begin position="921"/>
        <end position="930"/>
    </location>
</feature>
<feature type="repeat" description="13">
    <location>
        <begin position="931"/>
        <end position="940"/>
    </location>
</feature>
<feature type="repeat" description="14">
    <location>
        <begin position="941"/>
        <end position="950"/>
    </location>
</feature>
<feature type="repeat" description="15; approximate">
    <location>
        <begin position="951"/>
        <end position="960"/>
    </location>
</feature>
<feature type="repeat" description="16">
    <location>
        <begin position="961"/>
        <end position="970"/>
    </location>
</feature>
<feature type="repeat" description="17">
    <location>
        <begin position="971"/>
        <end position="980"/>
    </location>
</feature>
<feature type="repeat" description="18">
    <location>
        <begin position="981"/>
        <end position="990"/>
    </location>
</feature>
<feature type="repeat" description="19">
    <location>
        <begin position="991"/>
        <end position="1000"/>
    </location>
</feature>
<feature type="repeat" description="20">
    <location>
        <begin position="1001"/>
        <end position="1010"/>
    </location>
</feature>
<feature type="repeat" description="21">
    <location>
        <begin position="1011"/>
        <end position="1020"/>
    </location>
</feature>
<feature type="repeat" description="22; approximate">
    <location>
        <begin position="1021"/>
        <end position="1030"/>
    </location>
</feature>
<feature type="repeat" description="23">
    <location>
        <begin position="1031"/>
        <end position="1040"/>
    </location>
</feature>
<feature type="repeat" description="24">
    <location>
        <begin position="1041"/>
        <end position="1050"/>
    </location>
</feature>
<feature type="repeat" description="25">
    <location>
        <begin position="1051"/>
        <end position="1060"/>
    </location>
</feature>
<feature type="repeat" description="26">
    <location>
        <begin position="1061"/>
        <end position="1070"/>
    </location>
</feature>
<feature type="repeat" description="27; approximate">
    <location>
        <begin position="1071"/>
        <end position="1080"/>
    </location>
</feature>
<feature type="repeat" description="28; approximate">
    <location>
        <begin position="1081"/>
        <end position="1090"/>
    </location>
</feature>
<feature type="repeat" description="29">
    <location>
        <begin position="1091"/>
        <end position="1100"/>
    </location>
</feature>
<feature type="repeat" description="30">
    <location>
        <begin position="1101"/>
        <end position="1110"/>
    </location>
</feature>
<feature type="repeat" description="31">
    <location>
        <begin position="1111"/>
        <end position="1120"/>
    </location>
</feature>
<feature type="repeat" description="32">
    <location>
        <begin position="1121"/>
        <end position="1130"/>
    </location>
</feature>
<feature type="repeat" description="33">
    <location>
        <begin position="1131"/>
        <end position="1140"/>
    </location>
</feature>
<feature type="repeat" description="34">
    <location>
        <begin position="1141"/>
        <end position="1150"/>
    </location>
</feature>
<feature type="repeat" description="35">
    <location>
        <begin position="1151"/>
        <end position="1160"/>
    </location>
</feature>
<feature type="repeat" description="36">
    <location>
        <begin position="1161"/>
        <end position="1170"/>
    </location>
</feature>
<feature type="repeat" description="37; approximate">
    <location>
        <begin position="1171"/>
        <end position="1180"/>
    </location>
</feature>
<feature type="repeat" description="38; approximate">
    <location>
        <begin position="1181"/>
        <end position="1190"/>
    </location>
</feature>
<feature type="repeat" description="39">
    <location>
        <begin position="1191"/>
        <end position="1200"/>
    </location>
</feature>
<feature type="repeat" description="40">
    <location>
        <begin position="1201"/>
        <end position="1210"/>
    </location>
</feature>
<feature type="repeat" description="41">
    <location>
        <begin position="1211"/>
        <end position="1220"/>
    </location>
</feature>
<feature type="repeat" description="42; approximate">
    <location>
        <begin position="1221"/>
        <end position="1230"/>
    </location>
</feature>
<feature type="repeat" description="43; approximate">
    <location>
        <begin position="1231"/>
        <end position="1240"/>
    </location>
</feature>
<feature type="repeat" description="44">
    <location>
        <begin position="1241"/>
        <end position="1250"/>
    </location>
</feature>
<feature type="repeat" description="45">
    <location>
        <begin position="1251"/>
        <end position="1260"/>
    </location>
</feature>
<feature type="repeat" description="46; approximate">
    <location>
        <begin position="1261"/>
        <end position="1270"/>
    </location>
</feature>
<feature type="repeat" description="47">
    <location>
        <begin position="1271"/>
        <end position="1280"/>
    </location>
</feature>
<feature type="repeat" description="48">
    <location>
        <begin position="1281"/>
        <end position="1290"/>
    </location>
</feature>
<feature type="repeat" description="49">
    <location>
        <begin position="1291"/>
        <end position="1300"/>
    </location>
</feature>
<feature type="repeat" description="50; approximate">
    <location>
        <begin position="1301"/>
        <end position="1310"/>
    </location>
</feature>
<feature type="repeat" description="51">
    <location>
        <begin position="1311"/>
        <end position="1320"/>
    </location>
</feature>
<feature type="repeat" description="52; approximate">
    <location>
        <begin position="1321"/>
        <end position="1330"/>
    </location>
</feature>
<feature type="repeat" description="53; approximate">
    <location>
        <begin position="1331"/>
        <end position="1340"/>
    </location>
</feature>
<feature type="repeat" description="54; approximate">
    <location>
        <begin position="1341"/>
        <end position="1350"/>
    </location>
</feature>
<feature type="repeat" description="55; approximate">
    <location>
        <begin position="1351"/>
        <end position="1360"/>
    </location>
</feature>
<feature type="repeat" description="56; approximate">
    <location>
        <begin position="1361"/>
        <end position="1370"/>
    </location>
</feature>
<feature type="repeat" description="57; approximate">
    <location>
        <begin position="1371"/>
        <end position="1380"/>
    </location>
</feature>
<feature type="repeat" description="58; approximate">
    <location>
        <begin position="1381"/>
        <end position="1390"/>
    </location>
</feature>
<feature type="repeat" description="59; approximate">
    <location>
        <begin position="1391"/>
        <end position="1400"/>
    </location>
</feature>
<feature type="repeat" description="60; approximate">
    <location>
        <begin position="1401"/>
        <end position="1410"/>
    </location>
</feature>
<feature type="repeat" description="61; approximate">
    <location>
        <begin position="1411"/>
        <end position="1420"/>
    </location>
</feature>
<feature type="repeat" description="62; approximate">
    <location>
        <begin position="1421"/>
        <end position="1430"/>
    </location>
</feature>
<feature type="region of interest" description="Disordered" evidence="2">
    <location>
        <begin position="1"/>
        <end position="24"/>
    </location>
</feature>
<feature type="region of interest" description="Disordered" evidence="2">
    <location>
        <begin position="341"/>
        <end position="365"/>
    </location>
</feature>
<feature type="region of interest" description="Disordered" evidence="2">
    <location>
        <begin position="401"/>
        <end position="433"/>
    </location>
</feature>
<feature type="region of interest" description="62 X 10 AA approximate tandem repeats">
    <location>
        <begin position="751"/>
        <end position="1430"/>
    </location>
</feature>
<feature type="region of interest" description="Disordered" evidence="2">
    <location>
        <begin position="1342"/>
        <end position="1365"/>
    </location>
</feature>
<feature type="compositionally biased region" description="Basic residues" evidence="2">
    <location>
        <begin position="405"/>
        <end position="415"/>
    </location>
</feature>
<feature type="compositionally biased region" description="Low complexity" evidence="2">
    <location>
        <begin position="1342"/>
        <end position="1363"/>
    </location>
</feature>
<feature type="splice variant" id="VSP_053937" description="In isoform 3." evidence="6">
    <location>
        <begin position="1"/>
        <end position="469"/>
    </location>
</feature>
<feature type="splice variant" id="VSP_053938" description="In isoform 4 and isoform 5." evidence="6">
    <location>
        <begin position="16"/>
        <end position="412"/>
    </location>
</feature>
<feature type="splice variant" id="VSP_043513" description="In isoform 2 and isoform 5." evidence="5">
    <original>ARAQMGIGEEAVAGPWNWDDMDIDCLTREELGDDAQAWSRFSF</original>
    <variation>IYSPCLQIPLINCSSPSHGAKVHPWNLCPHSSQGSYGQSAEGVM</variation>
    <location>
        <begin position="663"/>
        <end position="705"/>
    </location>
</feature>
<feature type="splice variant" id="VSP_043514" description="In isoform 2 and isoform 5." evidence="5">
    <location>
        <begin position="706"/>
        <end position="1431"/>
    </location>
</feature>
<feature type="sequence variant" id="VAR_062122" description="In dbSNP:rs60674633.">
    <original>R</original>
    <variation>W</variation>
    <location>
        <position position="65"/>
    </location>
</feature>
<feature type="sequence variant" id="VAR_053510" description="In dbSNP:rs17297490." evidence="3">
    <original>S</original>
    <variation>G</variation>
    <location>
        <position position="738"/>
    </location>
</feature>
<feature type="sequence variant" id="VAR_076264" description="In dbSNP:rs1211752617." evidence="4">
    <original>G</original>
    <variation>S</variation>
    <location>
        <position position="951"/>
    </location>
</feature>
<feature type="sequence conflict" description="In Ref. 5; AAA79334." evidence="6" ref="5">
    <original>S</original>
    <variation>T</variation>
    <location>
        <position position="747"/>
    </location>
</feature>
<feature type="sequence conflict" description="In Ref. 1; BAA83066." evidence="6" ref="1">
    <original>S</original>
    <variation>G</variation>
    <location>
        <position position="768"/>
    </location>
</feature>
<feature type="sequence conflict" description="In Ref. 1; BAA83066." evidence="6" ref="1">
    <original>S</original>
    <variation>G</variation>
    <location>
        <position position="812"/>
    </location>
</feature>
<feature type="sequence conflict" description="In Ref. 1; BAA83066." evidence="6" ref="1">
    <original>S</original>
    <variation>G</variation>
    <location>
        <position position="824"/>
    </location>
</feature>
<feature type="sequence conflict" description="In Ref. 1; BAA83066." evidence="6" ref="1">
    <original>N</original>
    <variation>G</variation>
    <location>
        <position position="1026"/>
    </location>
</feature>
<feature type="sequence conflict" description="In Ref. 1; BAA83066." evidence="6" ref="1">
    <original>S</original>
    <variation>G</variation>
    <location>
        <position position="1056"/>
    </location>
</feature>
<comment type="function">
    <text>Could be involved with bystin and tastin in a cell adhesion molecule complex that mediates an initial attachment of the blastocyst to uterine epithelial cells at the time of the embryo implantation. Directly responsible for homophilic cell adhesion.</text>
</comment>
<comment type="subunit">
    <text>Directly binds bystin, and indirectly tastin.</text>
</comment>
<comment type="interaction">
    <interactant intactId="EBI-950001">
        <id>Q12816</id>
    </interactant>
    <interactant intactId="EBI-358049">
        <id>Q13895</id>
        <label>BYSL</label>
    </interactant>
    <organismsDiffer>false</organismsDiffer>
    <experiments>4</experiments>
</comment>
<comment type="alternative products">
    <event type="alternative splicing"/>
    <isoform>
        <id>Q12816-1</id>
        <name>1</name>
        <sequence type="displayed"/>
    </isoform>
    <isoform>
        <id>Q12816-2</id>
        <name>2</name>
        <sequence type="described" ref="VSP_043513 VSP_043514"/>
    </isoform>
    <isoform>
        <id>Q12816-3</id>
        <name>3</name>
        <sequence type="described" ref="VSP_053937"/>
    </isoform>
    <isoform>
        <id>Q12816-4</id>
        <name>4</name>
        <sequence type="described" ref="VSP_053938"/>
    </isoform>
    <isoform>
        <id>Q12816-5</id>
        <name>5</name>
        <sequence type="described" ref="VSP_053938 VSP_043513 VSP_043514"/>
    </isoform>
</comment>
<comment type="tissue specificity">
    <text>Strong expression at implantation sites. Found in the placenta from the sixth week of pregnancy. Was localized in the cytoplasm of the syncytiotrophoblast in the chorionic villi and in endometrial decidual cells at the uteroplacental interface. After week 10, the level decreased and then disappeared from placental villi. Also found in macrophages.</text>
</comment>
<comment type="sequence caution" evidence="6">
    <conflict type="erroneous initiation">
        <sequence resource="EMBL-CDS" id="AAA79334"/>
    </conflict>
    <text>Truncated N-terminus.</text>
</comment>
<comment type="sequence caution" evidence="6">
    <conflict type="erroneous initiation">
        <sequence resource="EMBL-CDS" id="BAA83066"/>
    </conflict>
    <text>Extended N-terminus.</text>
</comment>
<reference key="1">
    <citation type="journal article" date="1999" name="DNA Res.">
        <title>Prediction of the coding sequences of unidentified human genes. XIV. The complete sequences of 100 new cDNA clones from brain which code for large proteins in vitro.</title>
        <authorList>
            <person name="Kikuno R."/>
            <person name="Nagase T."/>
            <person name="Ishikawa K."/>
            <person name="Hirosawa M."/>
            <person name="Miyajima N."/>
            <person name="Tanaka A."/>
            <person name="Kotani H."/>
            <person name="Nomura N."/>
            <person name="Ohara O."/>
        </authorList>
    </citation>
    <scope>NUCLEOTIDE SEQUENCE [LARGE SCALE MRNA] (ISOFORM 1)</scope>
    <scope>VARIANT GLY-738</scope>
    <source>
        <tissue>Brain</tissue>
    </source>
</reference>
<reference key="2">
    <citation type="journal article" date="2004" name="Nat. Genet.">
        <title>Complete sequencing and characterization of 21,243 full-length human cDNAs.</title>
        <authorList>
            <person name="Ota T."/>
            <person name="Suzuki Y."/>
            <person name="Nishikawa T."/>
            <person name="Otsuki T."/>
            <person name="Sugiyama T."/>
            <person name="Irie R."/>
            <person name="Wakamatsu A."/>
            <person name="Hayashi K."/>
            <person name="Sato H."/>
            <person name="Nagai K."/>
            <person name="Kimura K."/>
            <person name="Makita H."/>
            <person name="Sekine M."/>
            <person name="Obayashi M."/>
            <person name="Nishi T."/>
            <person name="Shibahara T."/>
            <person name="Tanaka T."/>
            <person name="Ishii S."/>
            <person name="Yamamoto J."/>
            <person name="Saito K."/>
            <person name="Kawai Y."/>
            <person name="Isono Y."/>
            <person name="Nakamura Y."/>
            <person name="Nagahari K."/>
            <person name="Murakami K."/>
            <person name="Yasuda T."/>
            <person name="Iwayanagi T."/>
            <person name="Wagatsuma M."/>
            <person name="Shiratori A."/>
            <person name="Sudo H."/>
            <person name="Hosoiri T."/>
            <person name="Kaku Y."/>
            <person name="Kodaira H."/>
            <person name="Kondo H."/>
            <person name="Sugawara M."/>
            <person name="Takahashi M."/>
            <person name="Kanda K."/>
            <person name="Yokoi T."/>
            <person name="Furuya T."/>
            <person name="Kikkawa E."/>
            <person name="Omura Y."/>
            <person name="Abe K."/>
            <person name="Kamihara K."/>
            <person name="Katsuta N."/>
            <person name="Sato K."/>
            <person name="Tanikawa M."/>
            <person name="Yamazaki M."/>
            <person name="Ninomiya K."/>
            <person name="Ishibashi T."/>
            <person name="Yamashita H."/>
            <person name="Murakawa K."/>
            <person name="Fujimori K."/>
            <person name="Tanai H."/>
            <person name="Kimata M."/>
            <person name="Watanabe M."/>
            <person name="Hiraoka S."/>
            <person name="Chiba Y."/>
            <person name="Ishida S."/>
            <person name="Ono Y."/>
            <person name="Takiguchi S."/>
            <person name="Watanabe S."/>
            <person name="Yosida M."/>
            <person name="Hotuta T."/>
            <person name="Kusano J."/>
            <person name="Kanehori K."/>
            <person name="Takahashi-Fujii A."/>
            <person name="Hara H."/>
            <person name="Tanase T.-O."/>
            <person name="Nomura Y."/>
            <person name="Togiya S."/>
            <person name="Komai F."/>
            <person name="Hara R."/>
            <person name="Takeuchi K."/>
            <person name="Arita M."/>
            <person name="Imose N."/>
            <person name="Musashino K."/>
            <person name="Yuuki H."/>
            <person name="Oshima A."/>
            <person name="Sasaki N."/>
            <person name="Aotsuka S."/>
            <person name="Yoshikawa Y."/>
            <person name="Matsunawa H."/>
            <person name="Ichihara T."/>
            <person name="Shiohata N."/>
            <person name="Sano S."/>
            <person name="Moriya S."/>
            <person name="Momiyama H."/>
            <person name="Satoh N."/>
            <person name="Takami S."/>
            <person name="Terashima Y."/>
            <person name="Suzuki O."/>
            <person name="Nakagawa S."/>
            <person name="Senoh A."/>
            <person name="Mizoguchi H."/>
            <person name="Goto Y."/>
            <person name="Shimizu F."/>
            <person name="Wakebe H."/>
            <person name="Hishigaki H."/>
            <person name="Watanabe T."/>
            <person name="Sugiyama A."/>
            <person name="Takemoto M."/>
            <person name="Kawakami B."/>
            <person name="Yamazaki M."/>
            <person name="Watanabe K."/>
            <person name="Kumagai A."/>
            <person name="Itakura S."/>
            <person name="Fukuzumi Y."/>
            <person name="Fujimori Y."/>
            <person name="Komiyama M."/>
            <person name="Tashiro H."/>
            <person name="Tanigami A."/>
            <person name="Fujiwara T."/>
            <person name="Ono T."/>
            <person name="Yamada K."/>
            <person name="Fujii Y."/>
            <person name="Ozaki K."/>
            <person name="Hirao M."/>
            <person name="Ohmori Y."/>
            <person name="Kawabata A."/>
            <person name="Hikiji T."/>
            <person name="Kobatake N."/>
            <person name="Inagaki H."/>
            <person name="Ikema Y."/>
            <person name="Okamoto S."/>
            <person name="Okitani R."/>
            <person name="Kawakami T."/>
            <person name="Noguchi S."/>
            <person name="Itoh T."/>
            <person name="Shigeta K."/>
            <person name="Senba T."/>
            <person name="Matsumura K."/>
            <person name="Nakajima Y."/>
            <person name="Mizuno T."/>
            <person name="Morinaga M."/>
            <person name="Sasaki M."/>
            <person name="Togashi T."/>
            <person name="Oyama M."/>
            <person name="Hata H."/>
            <person name="Watanabe M."/>
            <person name="Komatsu T."/>
            <person name="Mizushima-Sugano J."/>
            <person name="Satoh T."/>
            <person name="Shirai Y."/>
            <person name="Takahashi Y."/>
            <person name="Nakagawa K."/>
            <person name="Okumura K."/>
            <person name="Nagase T."/>
            <person name="Nomura N."/>
            <person name="Kikuchi H."/>
            <person name="Masuho Y."/>
            <person name="Yamashita R."/>
            <person name="Nakai K."/>
            <person name="Yada T."/>
            <person name="Nakamura Y."/>
            <person name="Ohara O."/>
            <person name="Isogai T."/>
            <person name="Sugano S."/>
        </authorList>
    </citation>
    <scope>NUCLEOTIDE SEQUENCE [LARGE SCALE MRNA] (ISOFORM 2)</scope>
</reference>
<reference key="3">
    <citation type="journal article" date="2005" name="Nature">
        <title>The DNA sequence of the human X chromosome.</title>
        <authorList>
            <person name="Ross M.T."/>
            <person name="Grafham D.V."/>
            <person name="Coffey A.J."/>
            <person name="Scherer S."/>
            <person name="McLay K."/>
            <person name="Muzny D."/>
            <person name="Platzer M."/>
            <person name="Howell G.R."/>
            <person name="Burrows C."/>
            <person name="Bird C.P."/>
            <person name="Frankish A."/>
            <person name="Lovell F.L."/>
            <person name="Howe K.L."/>
            <person name="Ashurst J.L."/>
            <person name="Fulton R.S."/>
            <person name="Sudbrak R."/>
            <person name="Wen G."/>
            <person name="Jones M.C."/>
            <person name="Hurles M.E."/>
            <person name="Andrews T.D."/>
            <person name="Scott C.E."/>
            <person name="Searle S."/>
            <person name="Ramser J."/>
            <person name="Whittaker A."/>
            <person name="Deadman R."/>
            <person name="Carter N.P."/>
            <person name="Hunt S.E."/>
            <person name="Chen R."/>
            <person name="Cree A."/>
            <person name="Gunaratne P."/>
            <person name="Havlak P."/>
            <person name="Hodgson A."/>
            <person name="Metzker M.L."/>
            <person name="Richards S."/>
            <person name="Scott G."/>
            <person name="Steffen D."/>
            <person name="Sodergren E."/>
            <person name="Wheeler D.A."/>
            <person name="Worley K.C."/>
            <person name="Ainscough R."/>
            <person name="Ambrose K.D."/>
            <person name="Ansari-Lari M.A."/>
            <person name="Aradhya S."/>
            <person name="Ashwell R.I."/>
            <person name="Babbage A.K."/>
            <person name="Bagguley C.L."/>
            <person name="Ballabio A."/>
            <person name="Banerjee R."/>
            <person name="Barker G.E."/>
            <person name="Barlow K.F."/>
            <person name="Barrett I.P."/>
            <person name="Bates K.N."/>
            <person name="Beare D.M."/>
            <person name="Beasley H."/>
            <person name="Beasley O."/>
            <person name="Beck A."/>
            <person name="Bethel G."/>
            <person name="Blechschmidt K."/>
            <person name="Brady N."/>
            <person name="Bray-Allen S."/>
            <person name="Bridgeman A.M."/>
            <person name="Brown A.J."/>
            <person name="Brown M.J."/>
            <person name="Bonnin D."/>
            <person name="Bruford E.A."/>
            <person name="Buhay C."/>
            <person name="Burch P."/>
            <person name="Burford D."/>
            <person name="Burgess J."/>
            <person name="Burrill W."/>
            <person name="Burton J."/>
            <person name="Bye J.M."/>
            <person name="Carder C."/>
            <person name="Carrel L."/>
            <person name="Chako J."/>
            <person name="Chapman J.C."/>
            <person name="Chavez D."/>
            <person name="Chen E."/>
            <person name="Chen G."/>
            <person name="Chen Y."/>
            <person name="Chen Z."/>
            <person name="Chinault C."/>
            <person name="Ciccodicola A."/>
            <person name="Clark S.Y."/>
            <person name="Clarke G."/>
            <person name="Clee C.M."/>
            <person name="Clegg S."/>
            <person name="Clerc-Blankenburg K."/>
            <person name="Clifford K."/>
            <person name="Cobley V."/>
            <person name="Cole C.G."/>
            <person name="Conquer J.S."/>
            <person name="Corby N."/>
            <person name="Connor R.E."/>
            <person name="David R."/>
            <person name="Davies J."/>
            <person name="Davis C."/>
            <person name="Davis J."/>
            <person name="Delgado O."/>
            <person name="Deshazo D."/>
            <person name="Dhami P."/>
            <person name="Ding Y."/>
            <person name="Dinh H."/>
            <person name="Dodsworth S."/>
            <person name="Draper H."/>
            <person name="Dugan-Rocha S."/>
            <person name="Dunham A."/>
            <person name="Dunn M."/>
            <person name="Durbin K.J."/>
            <person name="Dutta I."/>
            <person name="Eades T."/>
            <person name="Ellwood M."/>
            <person name="Emery-Cohen A."/>
            <person name="Errington H."/>
            <person name="Evans K.L."/>
            <person name="Faulkner L."/>
            <person name="Francis F."/>
            <person name="Frankland J."/>
            <person name="Fraser A.E."/>
            <person name="Galgoczy P."/>
            <person name="Gilbert J."/>
            <person name="Gill R."/>
            <person name="Gloeckner G."/>
            <person name="Gregory S.G."/>
            <person name="Gribble S."/>
            <person name="Griffiths C."/>
            <person name="Grocock R."/>
            <person name="Gu Y."/>
            <person name="Gwilliam R."/>
            <person name="Hamilton C."/>
            <person name="Hart E.A."/>
            <person name="Hawes A."/>
            <person name="Heath P.D."/>
            <person name="Heitmann K."/>
            <person name="Hennig S."/>
            <person name="Hernandez J."/>
            <person name="Hinzmann B."/>
            <person name="Ho S."/>
            <person name="Hoffs M."/>
            <person name="Howden P.J."/>
            <person name="Huckle E.J."/>
            <person name="Hume J."/>
            <person name="Hunt P.J."/>
            <person name="Hunt A.R."/>
            <person name="Isherwood J."/>
            <person name="Jacob L."/>
            <person name="Johnson D."/>
            <person name="Jones S."/>
            <person name="de Jong P.J."/>
            <person name="Joseph S.S."/>
            <person name="Keenan S."/>
            <person name="Kelly S."/>
            <person name="Kershaw J.K."/>
            <person name="Khan Z."/>
            <person name="Kioschis P."/>
            <person name="Klages S."/>
            <person name="Knights A.J."/>
            <person name="Kosiura A."/>
            <person name="Kovar-Smith C."/>
            <person name="Laird G.K."/>
            <person name="Langford C."/>
            <person name="Lawlor S."/>
            <person name="Leversha M."/>
            <person name="Lewis L."/>
            <person name="Liu W."/>
            <person name="Lloyd C."/>
            <person name="Lloyd D.M."/>
            <person name="Loulseged H."/>
            <person name="Loveland J.E."/>
            <person name="Lovell J.D."/>
            <person name="Lozado R."/>
            <person name="Lu J."/>
            <person name="Lyne R."/>
            <person name="Ma J."/>
            <person name="Maheshwari M."/>
            <person name="Matthews L.H."/>
            <person name="McDowall J."/>
            <person name="McLaren S."/>
            <person name="McMurray A."/>
            <person name="Meidl P."/>
            <person name="Meitinger T."/>
            <person name="Milne S."/>
            <person name="Miner G."/>
            <person name="Mistry S.L."/>
            <person name="Morgan M."/>
            <person name="Morris S."/>
            <person name="Mueller I."/>
            <person name="Mullikin J.C."/>
            <person name="Nguyen N."/>
            <person name="Nordsiek G."/>
            <person name="Nyakatura G."/>
            <person name="O'dell C.N."/>
            <person name="Okwuonu G."/>
            <person name="Palmer S."/>
            <person name="Pandian R."/>
            <person name="Parker D."/>
            <person name="Parrish J."/>
            <person name="Pasternak S."/>
            <person name="Patel D."/>
            <person name="Pearce A.V."/>
            <person name="Pearson D.M."/>
            <person name="Pelan S.E."/>
            <person name="Perez L."/>
            <person name="Porter K.M."/>
            <person name="Ramsey Y."/>
            <person name="Reichwald K."/>
            <person name="Rhodes S."/>
            <person name="Ridler K.A."/>
            <person name="Schlessinger D."/>
            <person name="Schueler M.G."/>
            <person name="Sehra H.K."/>
            <person name="Shaw-Smith C."/>
            <person name="Shen H."/>
            <person name="Sheridan E.M."/>
            <person name="Shownkeen R."/>
            <person name="Skuce C.D."/>
            <person name="Smith M.L."/>
            <person name="Sotheran E.C."/>
            <person name="Steingruber H.E."/>
            <person name="Steward C.A."/>
            <person name="Storey R."/>
            <person name="Swann R.M."/>
            <person name="Swarbreck D."/>
            <person name="Tabor P.E."/>
            <person name="Taudien S."/>
            <person name="Taylor T."/>
            <person name="Teague B."/>
            <person name="Thomas K."/>
            <person name="Thorpe A."/>
            <person name="Timms K."/>
            <person name="Tracey A."/>
            <person name="Trevanion S."/>
            <person name="Tromans A.C."/>
            <person name="d'Urso M."/>
            <person name="Verduzco D."/>
            <person name="Villasana D."/>
            <person name="Waldron L."/>
            <person name="Wall M."/>
            <person name="Wang Q."/>
            <person name="Warren J."/>
            <person name="Warry G.L."/>
            <person name="Wei X."/>
            <person name="West A."/>
            <person name="Whitehead S.L."/>
            <person name="Whiteley M.N."/>
            <person name="Wilkinson J.E."/>
            <person name="Willey D.L."/>
            <person name="Williams G."/>
            <person name="Williams L."/>
            <person name="Williamson A."/>
            <person name="Williamson H."/>
            <person name="Wilming L."/>
            <person name="Woodmansey R.L."/>
            <person name="Wray P.W."/>
            <person name="Yen J."/>
            <person name="Zhang J."/>
            <person name="Zhou J."/>
            <person name="Zoghbi H."/>
            <person name="Zorilla S."/>
            <person name="Buck D."/>
            <person name="Reinhardt R."/>
            <person name="Poustka A."/>
            <person name="Rosenthal A."/>
            <person name="Lehrach H."/>
            <person name="Meindl A."/>
            <person name="Minx P.J."/>
            <person name="Hillier L.W."/>
            <person name="Willard H.F."/>
            <person name="Wilson R.K."/>
            <person name="Waterston R.H."/>
            <person name="Rice C.M."/>
            <person name="Vaudin M."/>
            <person name="Coulson A."/>
            <person name="Nelson D.L."/>
            <person name="Weinstock G."/>
            <person name="Sulston J.E."/>
            <person name="Durbin R.M."/>
            <person name="Hubbard T."/>
            <person name="Gibbs R.A."/>
            <person name="Beck S."/>
            <person name="Rogers J."/>
            <person name="Bentley D.R."/>
        </authorList>
    </citation>
    <scope>NUCLEOTIDE SEQUENCE [LARGE SCALE GENOMIC DNA]</scope>
</reference>
<reference key="4">
    <citation type="submission" date="2005-07" db="EMBL/GenBank/DDBJ databases">
        <authorList>
            <person name="Mural R.J."/>
            <person name="Istrail S."/>
            <person name="Sutton G."/>
            <person name="Florea L."/>
            <person name="Halpern A.L."/>
            <person name="Mobarry C.M."/>
            <person name="Lippert R."/>
            <person name="Walenz B."/>
            <person name="Shatkay H."/>
            <person name="Dew I."/>
            <person name="Miller J.R."/>
            <person name="Flanigan M.J."/>
            <person name="Edwards N.J."/>
            <person name="Bolanos R."/>
            <person name="Fasulo D."/>
            <person name="Halldorsson B.V."/>
            <person name="Hannenhalli S."/>
            <person name="Turner R."/>
            <person name="Yooseph S."/>
            <person name="Lu F."/>
            <person name="Nusskern D.R."/>
            <person name="Shue B.C."/>
            <person name="Zheng X.H."/>
            <person name="Zhong F."/>
            <person name="Delcher A.L."/>
            <person name="Huson D.H."/>
            <person name="Kravitz S.A."/>
            <person name="Mouchard L."/>
            <person name="Reinert K."/>
            <person name="Remington K.A."/>
            <person name="Clark A.G."/>
            <person name="Waterman M.S."/>
            <person name="Eichler E.E."/>
            <person name="Adams M.D."/>
            <person name="Hunkapiller M.W."/>
            <person name="Myers E.W."/>
            <person name="Venter J.C."/>
        </authorList>
    </citation>
    <scope>NUCLEOTIDE SEQUENCE [LARGE SCALE GENOMIC DNA]</scope>
</reference>
<reference key="5">
    <citation type="journal article" date="1995" name="Genes Dev.">
        <title>Trophinin and tastin, a novel cell adhesion molecule complex with potential involvement in embryo implantation.</title>
        <authorList>
            <person name="Fukuda M.N."/>
            <person name="Sato T."/>
            <person name="Nakayama J."/>
            <person name="Klier G."/>
            <person name="Mikami M."/>
            <person name="Aoki D."/>
            <person name="Nozawa S."/>
        </authorList>
    </citation>
    <scope>NUCLEOTIDE SEQUENCE [MRNA] OF 674-1431 (ISOFORM 1)</scope>
</reference>
<reference key="6">
    <citation type="submission" date="2003-07" db="EMBL/GenBank/DDBJ databases">
        <authorList>
            <person name="Fukuda M."/>
            <person name="Sato T."/>
        </authorList>
    </citation>
    <scope>SEQUENCE REVISION TO 697; 736 AND 747</scope>
</reference>
<reference key="7">
    <citation type="journal article" date="2012" name="Transl. Psychiatry">
        <title>Analysis of the chromosome X exome in patients with autism spectrum disorders identified novel candidate genes, including TMLHE.</title>
        <authorList>
            <person name="Nava C."/>
            <person name="Lamari F."/>
            <person name="Heron D."/>
            <person name="Mignot C."/>
            <person name="Rastetter A."/>
            <person name="Keren B."/>
            <person name="Cohen D."/>
            <person name="Faudet A."/>
            <person name="Bouteiller D."/>
            <person name="Gilleron M."/>
            <person name="Jacquette A."/>
            <person name="Whalen S."/>
            <person name="Afenjar A."/>
            <person name="Perisse D."/>
            <person name="Laurent C."/>
            <person name="Dupuits C."/>
            <person name="Gautier C."/>
            <person name="Gerard M."/>
            <person name="Huguet G."/>
            <person name="Caillet S."/>
            <person name="Leheup B."/>
            <person name="Leboyer M."/>
            <person name="Gillberg C."/>
            <person name="Delorme R."/>
            <person name="Bourgeron T."/>
            <person name="Brice A."/>
            <person name="Depienne C."/>
        </authorList>
    </citation>
    <scope>VARIANT SER-951</scope>
</reference>